<dbReference type="EC" id="7.1.1.-" evidence="1"/>
<dbReference type="EMBL" id="CP000781">
    <property type="protein sequence ID" value="ABS69845.1"/>
    <property type="molecule type" value="Genomic_DNA"/>
</dbReference>
<dbReference type="SMR" id="A7IP99"/>
<dbReference type="STRING" id="78245.Xaut_4625"/>
<dbReference type="KEGG" id="xau:Xaut_4625"/>
<dbReference type="eggNOG" id="COG1143">
    <property type="taxonomic scope" value="Bacteria"/>
</dbReference>
<dbReference type="HOGENOM" id="CLU_067218_5_1_5"/>
<dbReference type="OrthoDB" id="9808559at2"/>
<dbReference type="PhylomeDB" id="A7IP99"/>
<dbReference type="Proteomes" id="UP000002417">
    <property type="component" value="Chromosome"/>
</dbReference>
<dbReference type="GO" id="GO:0005886">
    <property type="term" value="C:plasma membrane"/>
    <property type="evidence" value="ECO:0007669"/>
    <property type="project" value="UniProtKB-SubCell"/>
</dbReference>
<dbReference type="GO" id="GO:0051539">
    <property type="term" value="F:4 iron, 4 sulfur cluster binding"/>
    <property type="evidence" value="ECO:0007669"/>
    <property type="project" value="UniProtKB-KW"/>
</dbReference>
<dbReference type="GO" id="GO:0005506">
    <property type="term" value="F:iron ion binding"/>
    <property type="evidence" value="ECO:0007669"/>
    <property type="project" value="UniProtKB-UniRule"/>
</dbReference>
<dbReference type="GO" id="GO:0050136">
    <property type="term" value="F:NADH:ubiquinone reductase (non-electrogenic) activity"/>
    <property type="evidence" value="ECO:0007669"/>
    <property type="project" value="UniProtKB-UniRule"/>
</dbReference>
<dbReference type="GO" id="GO:0048038">
    <property type="term" value="F:quinone binding"/>
    <property type="evidence" value="ECO:0007669"/>
    <property type="project" value="UniProtKB-KW"/>
</dbReference>
<dbReference type="GO" id="GO:0009060">
    <property type="term" value="P:aerobic respiration"/>
    <property type="evidence" value="ECO:0007669"/>
    <property type="project" value="TreeGrafter"/>
</dbReference>
<dbReference type="FunFam" id="3.30.70.3270:FF:000001">
    <property type="entry name" value="NADH-quinone oxidoreductase subunit I 1"/>
    <property type="match status" value="1"/>
</dbReference>
<dbReference type="Gene3D" id="3.30.70.3270">
    <property type="match status" value="1"/>
</dbReference>
<dbReference type="HAMAP" id="MF_01351">
    <property type="entry name" value="NDH1_NuoI"/>
    <property type="match status" value="1"/>
</dbReference>
<dbReference type="InterPro" id="IPR017896">
    <property type="entry name" value="4Fe4S_Fe-S-bd"/>
</dbReference>
<dbReference type="InterPro" id="IPR017900">
    <property type="entry name" value="4Fe4S_Fe_S_CS"/>
</dbReference>
<dbReference type="InterPro" id="IPR010226">
    <property type="entry name" value="NADH_quinone_OxRdtase_chainI"/>
</dbReference>
<dbReference type="NCBIfam" id="TIGR01971">
    <property type="entry name" value="NuoI"/>
    <property type="match status" value="1"/>
</dbReference>
<dbReference type="NCBIfam" id="NF004538">
    <property type="entry name" value="PRK05888.1-4"/>
    <property type="match status" value="1"/>
</dbReference>
<dbReference type="NCBIfam" id="NF004539">
    <property type="entry name" value="PRK05888.1-5"/>
    <property type="match status" value="1"/>
</dbReference>
<dbReference type="PANTHER" id="PTHR10849:SF20">
    <property type="entry name" value="NADH DEHYDROGENASE [UBIQUINONE] IRON-SULFUR PROTEIN 8, MITOCHONDRIAL"/>
    <property type="match status" value="1"/>
</dbReference>
<dbReference type="PANTHER" id="PTHR10849">
    <property type="entry name" value="NADH DEHYDROGENASE UBIQUINONE IRON-SULFUR PROTEIN 8, MITOCHONDRIAL"/>
    <property type="match status" value="1"/>
</dbReference>
<dbReference type="Pfam" id="PF12838">
    <property type="entry name" value="Fer4_7"/>
    <property type="match status" value="1"/>
</dbReference>
<dbReference type="SUPFAM" id="SSF54862">
    <property type="entry name" value="4Fe-4S ferredoxins"/>
    <property type="match status" value="1"/>
</dbReference>
<dbReference type="PROSITE" id="PS00198">
    <property type="entry name" value="4FE4S_FER_1"/>
    <property type="match status" value="2"/>
</dbReference>
<dbReference type="PROSITE" id="PS51379">
    <property type="entry name" value="4FE4S_FER_2"/>
    <property type="match status" value="2"/>
</dbReference>
<comment type="function">
    <text evidence="1">NDH-1 shuttles electrons from NADH, via FMN and iron-sulfur (Fe-S) centers, to quinones in the respiratory chain. The immediate electron acceptor for the enzyme in this species is believed to be ubiquinone. Couples the redox reaction to proton translocation (for every two electrons transferred, four hydrogen ions are translocated across the cytoplasmic membrane), and thus conserves the redox energy in a proton gradient.</text>
</comment>
<comment type="catalytic activity">
    <reaction evidence="1">
        <text>a quinone + NADH + 5 H(+)(in) = a quinol + NAD(+) + 4 H(+)(out)</text>
        <dbReference type="Rhea" id="RHEA:57888"/>
        <dbReference type="ChEBI" id="CHEBI:15378"/>
        <dbReference type="ChEBI" id="CHEBI:24646"/>
        <dbReference type="ChEBI" id="CHEBI:57540"/>
        <dbReference type="ChEBI" id="CHEBI:57945"/>
        <dbReference type="ChEBI" id="CHEBI:132124"/>
    </reaction>
</comment>
<comment type="cofactor">
    <cofactor evidence="1">
        <name>[4Fe-4S] cluster</name>
        <dbReference type="ChEBI" id="CHEBI:49883"/>
    </cofactor>
    <text evidence="1">Binds 2 [4Fe-4S] clusters per subunit.</text>
</comment>
<comment type="subunit">
    <text evidence="1">NDH-1 is composed of 14 different subunits. Subunits NuoA, H, J, K, L, M, N constitute the membrane sector of the complex.</text>
</comment>
<comment type="subcellular location">
    <subcellularLocation>
        <location evidence="1">Cell inner membrane</location>
        <topology evidence="1">Peripheral membrane protein</topology>
    </subcellularLocation>
</comment>
<comment type="similarity">
    <text evidence="1">Belongs to the complex I 23 kDa subunit family.</text>
</comment>
<accession>A7IP99</accession>
<feature type="chain" id="PRO_1000143671" description="NADH-quinone oxidoreductase subunit I">
    <location>
        <begin position="1"/>
        <end position="162"/>
    </location>
</feature>
<feature type="domain" description="4Fe-4S ferredoxin-type 1" evidence="1">
    <location>
        <begin position="52"/>
        <end position="82"/>
    </location>
</feature>
<feature type="domain" description="4Fe-4S ferredoxin-type 2" evidence="1">
    <location>
        <begin position="93"/>
        <end position="122"/>
    </location>
</feature>
<feature type="binding site" evidence="1">
    <location>
        <position position="62"/>
    </location>
    <ligand>
        <name>[4Fe-4S] cluster</name>
        <dbReference type="ChEBI" id="CHEBI:49883"/>
        <label>1</label>
    </ligand>
</feature>
<feature type="binding site" evidence="1">
    <location>
        <position position="65"/>
    </location>
    <ligand>
        <name>[4Fe-4S] cluster</name>
        <dbReference type="ChEBI" id="CHEBI:49883"/>
        <label>1</label>
    </ligand>
</feature>
<feature type="binding site" evidence="1">
    <location>
        <position position="68"/>
    </location>
    <ligand>
        <name>[4Fe-4S] cluster</name>
        <dbReference type="ChEBI" id="CHEBI:49883"/>
        <label>1</label>
    </ligand>
</feature>
<feature type="binding site" evidence="1">
    <location>
        <position position="72"/>
    </location>
    <ligand>
        <name>[4Fe-4S] cluster</name>
        <dbReference type="ChEBI" id="CHEBI:49883"/>
        <label>2</label>
    </ligand>
</feature>
<feature type="binding site" evidence="1">
    <location>
        <position position="102"/>
    </location>
    <ligand>
        <name>[4Fe-4S] cluster</name>
        <dbReference type="ChEBI" id="CHEBI:49883"/>
        <label>2</label>
    </ligand>
</feature>
<feature type="binding site" evidence="1">
    <location>
        <position position="105"/>
    </location>
    <ligand>
        <name>[4Fe-4S] cluster</name>
        <dbReference type="ChEBI" id="CHEBI:49883"/>
        <label>2</label>
    </ligand>
</feature>
<feature type="binding site" evidence="1">
    <location>
        <position position="108"/>
    </location>
    <ligand>
        <name>[4Fe-4S] cluster</name>
        <dbReference type="ChEBI" id="CHEBI:49883"/>
        <label>2</label>
    </ligand>
</feature>
<feature type="binding site" evidence="1">
    <location>
        <position position="112"/>
    </location>
    <ligand>
        <name>[4Fe-4S] cluster</name>
        <dbReference type="ChEBI" id="CHEBI:49883"/>
        <label>1</label>
    </ligand>
</feature>
<gene>
    <name evidence="1" type="primary">nuoI</name>
    <name type="ordered locus">Xaut_4625</name>
</gene>
<evidence type="ECO:0000255" key="1">
    <source>
        <dbReference type="HAMAP-Rule" id="MF_01351"/>
    </source>
</evidence>
<sequence>MKLDQAARGLFLTELVSGFFLAMRYFFKPKATLNYPFEKGPLSPRFRGEHALRRYPNGEERCIACKLCEAICPAQAITIEAGPRRNDGTRRTTRYDIDMVKCIYCGFCQEACPVDAIVEGPNFEFAAETREELYYDKEKLLANGDRWEREIARSIAMDAPYR</sequence>
<organism>
    <name type="scientific">Xanthobacter autotrophicus (strain ATCC BAA-1158 / Py2)</name>
    <dbReference type="NCBI Taxonomy" id="78245"/>
    <lineage>
        <taxon>Bacteria</taxon>
        <taxon>Pseudomonadati</taxon>
        <taxon>Pseudomonadota</taxon>
        <taxon>Alphaproteobacteria</taxon>
        <taxon>Hyphomicrobiales</taxon>
        <taxon>Xanthobacteraceae</taxon>
        <taxon>Xanthobacter</taxon>
    </lineage>
</organism>
<reference key="1">
    <citation type="submission" date="2007-07" db="EMBL/GenBank/DDBJ databases">
        <title>Complete sequence of chromosome of Xanthobacter autotrophicus Py2.</title>
        <authorList>
            <consortium name="US DOE Joint Genome Institute"/>
            <person name="Copeland A."/>
            <person name="Lucas S."/>
            <person name="Lapidus A."/>
            <person name="Barry K."/>
            <person name="Glavina del Rio T."/>
            <person name="Hammon N."/>
            <person name="Israni S."/>
            <person name="Dalin E."/>
            <person name="Tice H."/>
            <person name="Pitluck S."/>
            <person name="Sims D."/>
            <person name="Brettin T."/>
            <person name="Bruce D."/>
            <person name="Detter J.C."/>
            <person name="Han C."/>
            <person name="Tapia R."/>
            <person name="Brainard J."/>
            <person name="Schmutz J."/>
            <person name="Larimer F."/>
            <person name="Land M."/>
            <person name="Hauser L."/>
            <person name="Kyrpides N."/>
            <person name="Kim E."/>
            <person name="Ensigns S.A."/>
            <person name="Richardson P."/>
        </authorList>
    </citation>
    <scope>NUCLEOTIDE SEQUENCE [LARGE SCALE GENOMIC DNA]</scope>
    <source>
        <strain>ATCC BAA-1158 / Py2</strain>
    </source>
</reference>
<protein>
    <recommendedName>
        <fullName evidence="1">NADH-quinone oxidoreductase subunit I</fullName>
        <ecNumber evidence="1">7.1.1.-</ecNumber>
    </recommendedName>
    <alternativeName>
        <fullName evidence="1">NADH dehydrogenase I subunit I</fullName>
    </alternativeName>
    <alternativeName>
        <fullName evidence="1">NDH-1 subunit I</fullName>
    </alternativeName>
</protein>
<name>NUOI_XANP2</name>
<keyword id="KW-0004">4Fe-4S</keyword>
<keyword id="KW-0997">Cell inner membrane</keyword>
<keyword id="KW-1003">Cell membrane</keyword>
<keyword id="KW-0408">Iron</keyword>
<keyword id="KW-0411">Iron-sulfur</keyword>
<keyword id="KW-0472">Membrane</keyword>
<keyword id="KW-0479">Metal-binding</keyword>
<keyword id="KW-0520">NAD</keyword>
<keyword id="KW-0874">Quinone</keyword>
<keyword id="KW-1185">Reference proteome</keyword>
<keyword id="KW-0677">Repeat</keyword>
<keyword id="KW-1278">Translocase</keyword>
<keyword id="KW-0830">Ubiquinone</keyword>
<proteinExistence type="inferred from homology"/>